<keyword id="KW-1185">Reference proteome</keyword>
<keyword id="KW-0677">Repeat</keyword>
<keyword id="KW-0804">Transcription</keyword>
<keyword id="KW-0805">Transcription regulation</keyword>
<evidence type="ECO:0000250" key="1">
    <source>
        <dbReference type="UniProtKB" id="Q9FHH2"/>
    </source>
</evidence>
<evidence type="ECO:0000255" key="2">
    <source>
        <dbReference type="PROSITE-ProRule" id="PRU01251"/>
    </source>
</evidence>
<evidence type="ECO:0000269" key="3">
    <source>
    </source>
</evidence>
<evidence type="ECO:0000303" key="4">
    <source>
    </source>
</evidence>
<evidence type="ECO:0000305" key="5"/>
<evidence type="ECO:0000312" key="6">
    <source>
        <dbReference type="Araport" id="AT5G57130"/>
    </source>
</evidence>
<evidence type="ECO:0000312" key="7">
    <source>
        <dbReference type="EMBL" id="BAA97363.1"/>
    </source>
</evidence>
<dbReference type="EMBL" id="AB023042">
    <property type="protein sequence ID" value="BAA97363.1"/>
    <property type="molecule type" value="Genomic_DNA"/>
</dbReference>
<dbReference type="EMBL" id="CP002688">
    <property type="protein sequence ID" value="AED96851.1"/>
    <property type="molecule type" value="Genomic_DNA"/>
</dbReference>
<dbReference type="EMBL" id="AY059771">
    <property type="protein sequence ID" value="AAL24119.1"/>
    <property type="status" value="ALT_INIT"/>
    <property type="molecule type" value="mRNA"/>
</dbReference>
<dbReference type="EMBL" id="BT004338">
    <property type="protein sequence ID" value="AAO42332.1"/>
    <property type="molecule type" value="mRNA"/>
</dbReference>
<dbReference type="RefSeq" id="NP_568849.2">
    <property type="nucleotide sequence ID" value="NM_125095.4"/>
</dbReference>
<dbReference type="FunCoup" id="Q9LU73">
    <property type="interactions" value="49"/>
</dbReference>
<dbReference type="STRING" id="3702.Q9LU73"/>
<dbReference type="iPTMnet" id="Q9LU73"/>
<dbReference type="PaxDb" id="3702-AT5G57130.1"/>
<dbReference type="ProteomicsDB" id="232567"/>
<dbReference type="EnsemblPlants" id="AT5G57130.1">
    <property type="protein sequence ID" value="AT5G57130.1"/>
    <property type="gene ID" value="AT5G57130"/>
</dbReference>
<dbReference type="GeneID" id="835819"/>
<dbReference type="Gramene" id="AT5G57130.1">
    <property type="protein sequence ID" value="AT5G57130.1"/>
    <property type="gene ID" value="AT5G57130"/>
</dbReference>
<dbReference type="KEGG" id="ath:AT5G57130"/>
<dbReference type="Araport" id="AT5G57130"/>
<dbReference type="TAIR" id="AT5G57130">
    <property type="gene designation" value="SMXL5"/>
</dbReference>
<dbReference type="eggNOG" id="KOG1051">
    <property type="taxonomic scope" value="Eukaryota"/>
</dbReference>
<dbReference type="HOGENOM" id="CLU_006575_0_0_1"/>
<dbReference type="InParanoid" id="Q9LU73"/>
<dbReference type="OMA" id="TNYQFAP"/>
<dbReference type="PhylomeDB" id="Q9LU73"/>
<dbReference type="PRO" id="PR:Q9LU73"/>
<dbReference type="Proteomes" id="UP000006548">
    <property type="component" value="Chromosome 5"/>
</dbReference>
<dbReference type="ExpressionAtlas" id="Q9LU73">
    <property type="expression patterns" value="baseline and differential"/>
</dbReference>
<dbReference type="GO" id="GO:0033500">
    <property type="term" value="P:carbohydrate homeostasis"/>
    <property type="evidence" value="ECO:0000316"/>
    <property type="project" value="TAIR"/>
</dbReference>
<dbReference type="GO" id="GO:0010233">
    <property type="term" value="P:phloem transport"/>
    <property type="evidence" value="ECO:0000316"/>
    <property type="project" value="TAIR"/>
</dbReference>
<dbReference type="FunFam" id="1.10.1780.10:FF:000005">
    <property type="entry name" value="protein SUPPRESSOR OF MAX2 1"/>
    <property type="match status" value="1"/>
</dbReference>
<dbReference type="Gene3D" id="1.10.1780.10">
    <property type="entry name" value="Clp, N-terminal domain"/>
    <property type="match status" value="1"/>
</dbReference>
<dbReference type="Gene3D" id="3.40.50.300">
    <property type="entry name" value="P-loop containing nucleotide triphosphate hydrolases"/>
    <property type="match status" value="1"/>
</dbReference>
<dbReference type="InterPro" id="IPR036628">
    <property type="entry name" value="Clp_N_dom_sf"/>
</dbReference>
<dbReference type="InterPro" id="IPR004176">
    <property type="entry name" value="Clp_R_dom"/>
</dbReference>
<dbReference type="InterPro" id="IPR027417">
    <property type="entry name" value="P-loop_NTPase"/>
</dbReference>
<dbReference type="InterPro" id="IPR051650">
    <property type="entry name" value="SL_signaling_regulator"/>
</dbReference>
<dbReference type="PANTHER" id="PTHR43572">
    <property type="entry name" value="CHAPERONE PROTEIN CLPD, CHLOROPLASTIC"/>
    <property type="match status" value="1"/>
</dbReference>
<dbReference type="PANTHER" id="PTHR43572:SF3">
    <property type="entry name" value="PROTEIN SMAX1-LIKE 5"/>
    <property type="match status" value="1"/>
</dbReference>
<dbReference type="Pfam" id="PF02861">
    <property type="entry name" value="Clp_N"/>
    <property type="match status" value="1"/>
</dbReference>
<dbReference type="Pfam" id="PF23569">
    <property type="entry name" value="NBD_SMAX1"/>
    <property type="match status" value="1"/>
</dbReference>
<dbReference type="SUPFAM" id="SSF81923">
    <property type="entry name" value="Double Clp-N motif"/>
    <property type="match status" value="1"/>
</dbReference>
<dbReference type="PROSITE" id="PS51903">
    <property type="entry name" value="CLP_R"/>
    <property type="match status" value="1"/>
</dbReference>
<feature type="chain" id="PRO_0000435714" description="Protein SMAX1-LIKE 5">
    <location>
        <begin position="1"/>
        <end position="1028"/>
    </location>
</feature>
<feature type="domain" description="Clp R" evidence="2">
    <location>
        <begin position="8"/>
        <end position="199"/>
    </location>
</feature>
<feature type="region of interest" description="Repeat 1" evidence="2">
    <location>
        <begin position="12"/>
        <end position="102"/>
    </location>
</feature>
<feature type="region of interest" description="Repeat 2" evidence="2">
    <location>
        <begin position="116"/>
        <end position="199"/>
    </location>
</feature>
<feature type="short sequence motif" description="EAR" evidence="5">
    <location>
        <begin position="871"/>
        <end position="875"/>
    </location>
</feature>
<name>SMXL5_ARATH</name>
<gene>
    <name evidence="4" type="primary">SMXL5</name>
    <name evidence="6" type="ordered locus">At5g57130</name>
    <name evidence="7" type="ORF">MUL3.8</name>
</gene>
<proteinExistence type="evidence at transcript level"/>
<accession>Q9LU73</accession>
<accession>Q93YT8</accession>
<protein>
    <recommendedName>
        <fullName evidence="4">Protein SMAX1-LIKE 5</fullName>
        <shortName evidence="4">AtSMXL5</shortName>
    </recommendedName>
</protein>
<reference key="1">
    <citation type="journal article" date="2000" name="DNA Res.">
        <title>Structural analysis of Arabidopsis thaliana chromosome 5. X. Sequence features of the regions of 3,076,755 bp covered by sixty P1 and TAC clones.</title>
        <authorList>
            <person name="Sato S."/>
            <person name="Nakamura Y."/>
            <person name="Kaneko T."/>
            <person name="Katoh T."/>
            <person name="Asamizu E."/>
            <person name="Kotani H."/>
            <person name="Tabata S."/>
        </authorList>
    </citation>
    <scope>NUCLEOTIDE SEQUENCE [LARGE SCALE GENOMIC DNA]</scope>
    <source>
        <strain>cv. Columbia</strain>
    </source>
</reference>
<reference key="2">
    <citation type="journal article" date="2017" name="Plant J.">
        <title>Araport11: a complete reannotation of the Arabidopsis thaliana reference genome.</title>
        <authorList>
            <person name="Cheng C.Y."/>
            <person name="Krishnakumar V."/>
            <person name="Chan A.P."/>
            <person name="Thibaud-Nissen F."/>
            <person name="Schobel S."/>
            <person name="Town C.D."/>
        </authorList>
    </citation>
    <scope>GENOME REANNOTATION</scope>
    <source>
        <strain>cv. Columbia</strain>
    </source>
</reference>
<reference key="3">
    <citation type="journal article" date="2003" name="Science">
        <title>Empirical analysis of transcriptional activity in the Arabidopsis genome.</title>
        <authorList>
            <person name="Yamada K."/>
            <person name="Lim J."/>
            <person name="Dale J.M."/>
            <person name="Chen H."/>
            <person name="Shinn P."/>
            <person name="Palm C.J."/>
            <person name="Southwick A.M."/>
            <person name="Wu H.C."/>
            <person name="Kim C.J."/>
            <person name="Nguyen M."/>
            <person name="Pham P.K."/>
            <person name="Cheuk R.F."/>
            <person name="Karlin-Newmann G."/>
            <person name="Liu S.X."/>
            <person name="Lam B."/>
            <person name="Sakano H."/>
            <person name="Wu T."/>
            <person name="Yu G."/>
            <person name="Miranda M."/>
            <person name="Quach H.L."/>
            <person name="Tripp M."/>
            <person name="Chang C.H."/>
            <person name="Lee J.M."/>
            <person name="Toriumi M.J."/>
            <person name="Chan M.M."/>
            <person name="Tang C.C."/>
            <person name="Onodera C.S."/>
            <person name="Deng J.M."/>
            <person name="Akiyama K."/>
            <person name="Ansari Y."/>
            <person name="Arakawa T."/>
            <person name="Banh J."/>
            <person name="Banno F."/>
            <person name="Bowser L."/>
            <person name="Brooks S.Y."/>
            <person name="Carninci P."/>
            <person name="Chao Q."/>
            <person name="Choy N."/>
            <person name="Enju A."/>
            <person name="Goldsmith A.D."/>
            <person name="Gurjal M."/>
            <person name="Hansen N.F."/>
            <person name="Hayashizaki Y."/>
            <person name="Johnson-Hopson C."/>
            <person name="Hsuan V.W."/>
            <person name="Iida K."/>
            <person name="Karnes M."/>
            <person name="Khan S."/>
            <person name="Koesema E."/>
            <person name="Ishida J."/>
            <person name="Jiang P.X."/>
            <person name="Jones T."/>
            <person name="Kawai J."/>
            <person name="Kamiya A."/>
            <person name="Meyers C."/>
            <person name="Nakajima M."/>
            <person name="Narusaka M."/>
            <person name="Seki M."/>
            <person name="Sakurai T."/>
            <person name="Satou M."/>
            <person name="Tamse R."/>
            <person name="Vaysberg M."/>
            <person name="Wallender E.K."/>
            <person name="Wong C."/>
            <person name="Yamamura Y."/>
            <person name="Yuan S."/>
            <person name="Shinozaki K."/>
            <person name="Davis R.W."/>
            <person name="Theologis A."/>
            <person name="Ecker J.R."/>
        </authorList>
    </citation>
    <scope>NUCLEOTIDE SEQUENCE [LARGE SCALE MRNA] OF 93-1028</scope>
    <source>
        <strain>cv. Columbia</strain>
    </source>
</reference>
<reference key="4">
    <citation type="journal article" date="2013" name="Plant Physiol.">
        <title>SUPPRESSOR OF MORE AXILLARY GROWTH2 1 controls seed germination and seedling development in Arabidopsis.</title>
        <authorList>
            <person name="Stanga J.P."/>
            <person name="Smith S.M."/>
            <person name="Briggs W.R."/>
            <person name="Nelson D.C."/>
        </authorList>
    </citation>
    <scope>TISSUE SPECIFICITY</scope>
    <scope>GENE FAMILY</scope>
    <scope>NOMENCLATURE</scope>
</reference>
<reference key="5">
    <citation type="journal article" date="2014" name="Curr. Opin. Plant Biol.">
        <title>Strigolactone signalling: standing on the shoulders of DWARFs.</title>
        <authorList>
            <person name="Bennett T."/>
            <person name="Leyser O."/>
        </authorList>
    </citation>
    <scope>REVIEW</scope>
</reference>
<comment type="function">
    <text evidence="1">May function in a transcriptional corepressor complex.</text>
</comment>
<comment type="subunit">
    <text evidence="1">Interacts probably with TPL/TPR in an EAR-motif dependent manner.</text>
</comment>
<comment type="tissue specificity">
    <text evidence="3">Detected in roots, seedlings and axillary branches.</text>
</comment>
<comment type="similarity">
    <text evidence="5">Belongs to the ClpA/ClpB family.</text>
</comment>
<comment type="sequence caution" evidence="5">
    <conflict type="erroneous initiation">
        <sequence resource="EMBL-CDS" id="AAL24119"/>
    </conflict>
    <text>Truncated N-terminus.</text>
</comment>
<organism>
    <name type="scientific">Arabidopsis thaliana</name>
    <name type="common">Mouse-ear cress</name>
    <dbReference type="NCBI Taxonomy" id="3702"/>
    <lineage>
        <taxon>Eukaryota</taxon>
        <taxon>Viridiplantae</taxon>
        <taxon>Streptophyta</taxon>
        <taxon>Embryophyta</taxon>
        <taxon>Tracheophyta</taxon>
        <taxon>Spermatophyta</taxon>
        <taxon>Magnoliopsida</taxon>
        <taxon>eudicotyledons</taxon>
        <taxon>Gunneridae</taxon>
        <taxon>Pentapetalae</taxon>
        <taxon>rosids</taxon>
        <taxon>malvids</taxon>
        <taxon>Brassicales</taxon>
        <taxon>Brassicaceae</taxon>
        <taxon>Camelineae</taxon>
        <taxon>Arabidopsis</taxon>
    </lineage>
</organism>
<sequence>MRTGGYTIQQTLTTEAASVLKHSLTLARRRGHAQVTPLHVAATLLSSRTSLLRRACIKSHPGFSTNYQFAPSRLQHHHHHNQNHPLQCRALELCFNVALNRLPTVPGPMFHGQPSLANALVAALKRAQAHQRRGCIEQQQQTQTHPQTQQTQLLAVKVELEQLVISILDDPSVSRVMREAGFNSTAVKSCVEDCSVSSVFYGGSAVGVFSSPNSPDQQQQHHNSINRLHHYQNPKDFNFINPNFPLWQTHFLNQSPDQNPLLLSSSASHHHQQQRLREIDLKLVVDVLMRKKTKKKNPVIVGDSISFTEGFVSELMAKLERGEIDQTGELKQTHFVKFHFSPMASKFMRREDVELNIKELRKKVLSLTTSGKNAIIFTGDLKWTVKEITNNNSGGINEISSSYSPLDHLVEEIGKLITECNDDGDDDDCKTRKVWVMGTASFQTYMRCQMRQPSLETLWALHPVSVPSSANLGLSLHATSGHEARNMSTVNATKSLSGYDKAEEEETISHVLSCCPECVTSFDREAKSLKANQDKLLPSWLQSHDADSSSQKDELMGLKRKWNRFCETLHNQTGQLSMMGNYPYGLPYGSSHESSKSTSLIDSLGLKPNQRATNSIAKFRRQNSCTIEFDLGGNEHEKGESINEAEDDKGNETVTLDLGRSLFRSDSVTDTRLKLSALVKALEESIPRQTVTMRLIAESLMDCVSKKKDSWIIIEGRDTTAKRRVARTVSESVFGSFESLVHIDLKKKGNESKASPATLLAYELKNPEKVVFLIEDIDLADSRFLKLLADRFEDKRRIKTGIDHRQAIFILTKEDSRNVRNRDSVLQIGLEITAQSPGKKRKPESDLSIENGFWMKKEVCSRQSSFNSSYLDLNIKAEDEEVEGEISPISSDLTGEEETEFSSSSNFLNRIQNRFVLNRSCEPGIEKGMITAAFREIFPEREEGGGVRFSVEDKLVEELYGIQNGAFERWLKEVFQTGLLTVKKGGKKDTGVIRMVFGGIVDNKGYGGGVGGYMATFLPNKVQVSKFE</sequence>